<reference key="1">
    <citation type="journal article" date="1999" name="Nature">
        <title>Sequence and analysis of chromosome 2 of the plant Arabidopsis thaliana.</title>
        <authorList>
            <person name="Lin X."/>
            <person name="Kaul S."/>
            <person name="Rounsley S.D."/>
            <person name="Shea T.P."/>
            <person name="Benito M.-I."/>
            <person name="Town C.D."/>
            <person name="Fujii C.Y."/>
            <person name="Mason T.M."/>
            <person name="Bowman C.L."/>
            <person name="Barnstead M.E."/>
            <person name="Feldblyum T.V."/>
            <person name="Buell C.R."/>
            <person name="Ketchum K.A."/>
            <person name="Lee J.J."/>
            <person name="Ronning C.M."/>
            <person name="Koo H.L."/>
            <person name="Moffat K.S."/>
            <person name="Cronin L.A."/>
            <person name="Shen M."/>
            <person name="Pai G."/>
            <person name="Van Aken S."/>
            <person name="Umayam L."/>
            <person name="Tallon L.J."/>
            <person name="Gill J.E."/>
            <person name="Adams M.D."/>
            <person name="Carrera A.J."/>
            <person name="Creasy T.H."/>
            <person name="Goodman H.M."/>
            <person name="Somerville C.R."/>
            <person name="Copenhaver G.P."/>
            <person name="Preuss D."/>
            <person name="Nierman W.C."/>
            <person name="White O."/>
            <person name="Eisen J.A."/>
            <person name="Salzberg S.L."/>
            <person name="Fraser C.M."/>
            <person name="Venter J.C."/>
        </authorList>
    </citation>
    <scope>NUCLEOTIDE SEQUENCE [LARGE SCALE GENOMIC DNA]</scope>
    <source>
        <strain>cv. Columbia</strain>
    </source>
</reference>
<reference key="2">
    <citation type="journal article" date="2017" name="Plant J.">
        <title>Araport11: a complete reannotation of the Arabidopsis thaliana reference genome.</title>
        <authorList>
            <person name="Cheng C.Y."/>
            <person name="Krishnakumar V."/>
            <person name="Chan A.P."/>
            <person name="Thibaud-Nissen F."/>
            <person name="Schobel S."/>
            <person name="Town C.D."/>
        </authorList>
    </citation>
    <scope>GENOME REANNOTATION</scope>
    <source>
        <strain>cv. Columbia</strain>
    </source>
</reference>
<reference key="3">
    <citation type="submission" date="2006-05" db="EMBL/GenBank/DDBJ databases">
        <title>Arabidopsis ORF clones.</title>
        <authorList>
            <person name="Shinn P."/>
            <person name="Chen H."/>
            <person name="Kim C.J."/>
            <person name="Quinitio C."/>
            <person name="Ecker J.R."/>
        </authorList>
    </citation>
    <scope>NUCLEOTIDE SEQUENCE [LARGE SCALE MRNA]</scope>
    <source>
        <strain>cv. Columbia</strain>
    </source>
</reference>
<reference key="4">
    <citation type="submission" date="2006-07" db="EMBL/GenBank/DDBJ databases">
        <title>Large-scale analysis of RIKEN Arabidopsis full-length (RAFL) cDNAs.</title>
        <authorList>
            <person name="Totoki Y."/>
            <person name="Seki M."/>
            <person name="Ishida J."/>
            <person name="Nakajima M."/>
            <person name="Enju A."/>
            <person name="Kamiya A."/>
            <person name="Narusaka M."/>
            <person name="Shin-i T."/>
            <person name="Nakagawa M."/>
            <person name="Sakamoto N."/>
            <person name="Oishi K."/>
            <person name="Kohara Y."/>
            <person name="Kobayashi M."/>
            <person name="Toyoda A."/>
            <person name="Sakaki Y."/>
            <person name="Sakurai T."/>
            <person name="Iida K."/>
            <person name="Akiyama K."/>
            <person name="Satou M."/>
            <person name="Toyoda T."/>
            <person name="Konagaya A."/>
            <person name="Carninci P."/>
            <person name="Kawai J."/>
            <person name="Hayashizaki Y."/>
            <person name="Shinozaki K."/>
        </authorList>
    </citation>
    <scope>NUCLEOTIDE SEQUENCE [LARGE SCALE MRNA]</scope>
    <source>
        <strain>cv. Columbia</strain>
    </source>
</reference>
<reference key="5">
    <citation type="submission" date="2002-03" db="EMBL/GenBank/DDBJ databases">
        <title>Full-length cDNA from Arabidopsis thaliana.</title>
        <authorList>
            <person name="Brover V.V."/>
            <person name="Troukhan M.E."/>
            <person name="Alexandrov N.A."/>
            <person name="Lu Y.-P."/>
            <person name="Flavell R.B."/>
            <person name="Feldmann K.A."/>
        </authorList>
    </citation>
    <scope>NUCLEOTIDE SEQUENCE [LARGE SCALE MRNA]</scope>
</reference>
<reference key="6">
    <citation type="journal article" date="2014" name="Plant J.">
        <title>MAIN-LIKE1 is a crucial factor for correct cell division and differentiation in Arabidopsis thaliana.</title>
        <authorList>
            <person name="Uehlken C."/>
            <person name="Horvath B."/>
            <person name="Stadler R."/>
            <person name="Sauer N."/>
            <person name="Weingartner M."/>
        </authorList>
    </citation>
    <scope>FUNCTION</scope>
    <scope>SUBCELLULAR LOCATION</scope>
    <scope>TISSUE SPECIFICITY</scope>
    <scope>DISRUPTION PHENOTYPE</scope>
</reference>
<proteinExistence type="evidence at protein level"/>
<keyword id="KW-0032">Aminotransferase</keyword>
<keyword id="KW-0217">Developmental protein</keyword>
<keyword id="KW-0341">Growth regulation</keyword>
<keyword id="KW-0539">Nucleus</keyword>
<keyword id="KW-1185">Reference proteome</keyword>
<keyword id="KW-0808">Transferase</keyword>
<dbReference type="EMBL" id="AC006585">
    <property type="protein sequence ID" value="AAD23012.1"/>
    <property type="molecule type" value="Genomic_DNA"/>
</dbReference>
<dbReference type="EMBL" id="CP002685">
    <property type="protein sequence ID" value="AEC07649.1"/>
    <property type="molecule type" value="Genomic_DNA"/>
</dbReference>
<dbReference type="EMBL" id="BT025335">
    <property type="protein sequence ID" value="ABF57291.1"/>
    <property type="molecule type" value="mRNA"/>
</dbReference>
<dbReference type="EMBL" id="AK229557">
    <property type="protein sequence ID" value="BAF01410.1"/>
    <property type="molecule type" value="mRNA"/>
</dbReference>
<dbReference type="EMBL" id="AY084833">
    <property type="protein sequence ID" value="AAM61398.1"/>
    <property type="molecule type" value="mRNA"/>
</dbReference>
<dbReference type="PIR" id="B84643">
    <property type="entry name" value="B84643"/>
</dbReference>
<dbReference type="RefSeq" id="NP_565582.1">
    <property type="nucleotide sequence ID" value="NM_128059.5"/>
</dbReference>
<dbReference type="FunCoup" id="Q9SK32">
    <property type="interactions" value="319"/>
</dbReference>
<dbReference type="IntAct" id="Q9SK32">
    <property type="interactions" value="1"/>
</dbReference>
<dbReference type="STRING" id="3702.Q9SK32"/>
<dbReference type="PaxDb" id="3702-AT2G25010.1"/>
<dbReference type="ProteomicsDB" id="239038"/>
<dbReference type="EnsemblPlants" id="AT2G25010.1">
    <property type="protein sequence ID" value="AT2G25010.1"/>
    <property type="gene ID" value="AT2G25010"/>
</dbReference>
<dbReference type="GeneID" id="817040"/>
<dbReference type="Gramene" id="AT2G25010.1">
    <property type="protein sequence ID" value="AT2G25010.1"/>
    <property type="gene ID" value="AT2G25010"/>
</dbReference>
<dbReference type="KEGG" id="ath:AT2G25010"/>
<dbReference type="Araport" id="AT2G25010"/>
<dbReference type="TAIR" id="AT2G25010">
    <property type="gene designation" value="MAIL1"/>
</dbReference>
<dbReference type="eggNOG" id="ENOG502QW7G">
    <property type="taxonomic scope" value="Eukaryota"/>
</dbReference>
<dbReference type="HOGENOM" id="CLU_028845_3_0_1"/>
<dbReference type="InParanoid" id="Q9SK32"/>
<dbReference type="OMA" id="IWEGQER"/>
<dbReference type="PhylomeDB" id="Q9SK32"/>
<dbReference type="PRO" id="PR:Q9SK32"/>
<dbReference type="Proteomes" id="UP000006548">
    <property type="component" value="Chromosome 2"/>
</dbReference>
<dbReference type="ExpressionAtlas" id="Q9SK32">
    <property type="expression patterns" value="baseline and differential"/>
</dbReference>
<dbReference type="GO" id="GO:0005634">
    <property type="term" value="C:nucleus"/>
    <property type="evidence" value="ECO:0000314"/>
    <property type="project" value="TAIR"/>
</dbReference>
<dbReference type="GO" id="GO:0008483">
    <property type="term" value="F:transaminase activity"/>
    <property type="evidence" value="ECO:0007669"/>
    <property type="project" value="UniProtKB-KW"/>
</dbReference>
<dbReference type="GO" id="GO:0010073">
    <property type="term" value="P:meristem maintenance"/>
    <property type="evidence" value="ECO:0000315"/>
    <property type="project" value="TAIR"/>
</dbReference>
<dbReference type="GO" id="GO:0010082">
    <property type="term" value="P:regulation of root meristem growth"/>
    <property type="evidence" value="ECO:0000315"/>
    <property type="project" value="TAIR"/>
</dbReference>
<dbReference type="InterPro" id="IPR019557">
    <property type="entry name" value="AminoTfrase-like_pln_mobile"/>
</dbReference>
<dbReference type="InterPro" id="IPR044824">
    <property type="entry name" value="MAIN-like"/>
</dbReference>
<dbReference type="PANTHER" id="PTHR46033:SF35">
    <property type="entry name" value="PROTEIN MAIN-LIKE 1"/>
    <property type="match status" value="1"/>
</dbReference>
<dbReference type="PANTHER" id="PTHR46033">
    <property type="entry name" value="PROTEIN MAIN-LIKE 2"/>
    <property type="match status" value="1"/>
</dbReference>
<dbReference type="Pfam" id="PF10536">
    <property type="entry name" value="PMD"/>
    <property type="match status" value="1"/>
</dbReference>
<sequence>MDIDVGPVDPSVLYEQDLHVSSAVWEGQERGLLRCQEHTSLLHQWKLTDEQINLVDKAGFGYFRKIGPMSLNNSLISALVERWRRETNTFHLPLGEMTITLDEVALVLGLEIDGDPIVGSKVGDEVAMDMCGRLLGKLPSAANKEVNCSRVKLNWLKRTFSECPEDASFDVVKCHTRAYLLYLIGSTIFATTDGDKVSVKYLPLFEDFDQAGRYAWGAAALACLYRALGNASLKSQSNICGCLTLLQCWSYFHLDIGRPEKSEACFPLALLWKGKGSRSKTDLSEYRRELDDLDPSKITWCPYERFENLIPPHIKAKLILGRSKTTLVCFEKIELHFPDRCLRQFGKRQPIPLKVKRRDRKNRRLDDLDTSMSLACEEWAERGDHIVDSPGGGNVVDDGAYMEWYARISITKLYREAFLESQVMNMIACMREFEEAASGIALERLSPAEREVMESVKDTFANSLTFGGWQEVAVNSGYGKRRRRNEHTPTPNNGGGNDISSLLLQKEDS</sequence>
<evidence type="ECO:0000256" key="1">
    <source>
        <dbReference type="SAM" id="MobiDB-lite"/>
    </source>
</evidence>
<evidence type="ECO:0000269" key="2">
    <source>
    </source>
</evidence>
<evidence type="ECO:0000303" key="3">
    <source>
    </source>
</evidence>
<evidence type="ECO:0000305" key="4"/>
<evidence type="ECO:0000312" key="5">
    <source>
        <dbReference type="Araport" id="AT2G25010"/>
    </source>
</evidence>
<comment type="function">
    <text evidence="2">Acts as an important factor for cell fate determination and maintenance throughout plant development. Required for the organization of the root apical meristem (RAM) and the shoot apical meristem (SAM). Required to maintain genome stability and cell division activity in meristematic cells.</text>
</comment>
<comment type="interaction">
    <interactant intactId="EBI-25510817">
        <id>Q9SK32</id>
    </interactant>
    <interactant intactId="EBI-25510831">
        <id>Q9SVQ1</id>
        <label>YUC2</label>
    </interactant>
    <organismsDiffer>false</organismsDiffer>
    <experiments>4</experiments>
</comment>
<comment type="subcellular location">
    <subcellularLocation>
        <location evidence="2">Nucleus</location>
    </subcellularLocation>
</comment>
<comment type="tissue specificity">
    <text evidence="2">Expressed in root tips, the shoot apical meristem (SAM), leaves, mature flowers and embryos.</text>
</comment>
<comment type="disruption phenotype">
    <text evidence="2">Strong developmental phenotypes, such as extremely short, and agravitropic primary roots, small aerial organ size, altered shape and pale white leaves, bushy inflorescence and reduced number of seeds.</text>
</comment>
<name>MAIL1_ARATH</name>
<feature type="chain" id="PRO_0000438663" description="Protein MAIN-LIKE 1">
    <location>
        <begin position="1"/>
        <end position="509"/>
    </location>
</feature>
<feature type="region of interest" description="Disordered" evidence="1">
    <location>
        <begin position="477"/>
        <end position="509"/>
    </location>
</feature>
<feature type="compositionally biased region" description="Polar residues" evidence="1">
    <location>
        <begin position="488"/>
        <end position="503"/>
    </location>
</feature>
<feature type="sequence conflict" description="In Ref. 4; BAF01410." evidence="4" ref="4">
    <original>V</original>
    <variation>A</variation>
    <location>
        <position position="80"/>
    </location>
</feature>
<feature type="sequence conflict" description="In Ref. 5; AAM61398." evidence="4" ref="5">
    <original>G</original>
    <variation>D</variation>
    <location>
        <position position="123"/>
    </location>
</feature>
<protein>
    <recommendedName>
        <fullName evidence="3">Protein MAIN-LIKE 1</fullName>
    </recommendedName>
</protein>
<accession>Q9SK32</accession>
<accession>Q0WN90</accession>
<accession>Q8LFH9</accession>
<gene>
    <name evidence="3" type="primary">MAIL1</name>
    <name evidence="5" type="ordered locus">At2g25010</name>
</gene>
<organism>
    <name type="scientific">Arabidopsis thaliana</name>
    <name type="common">Mouse-ear cress</name>
    <dbReference type="NCBI Taxonomy" id="3702"/>
    <lineage>
        <taxon>Eukaryota</taxon>
        <taxon>Viridiplantae</taxon>
        <taxon>Streptophyta</taxon>
        <taxon>Embryophyta</taxon>
        <taxon>Tracheophyta</taxon>
        <taxon>Spermatophyta</taxon>
        <taxon>Magnoliopsida</taxon>
        <taxon>eudicotyledons</taxon>
        <taxon>Gunneridae</taxon>
        <taxon>Pentapetalae</taxon>
        <taxon>rosids</taxon>
        <taxon>malvids</taxon>
        <taxon>Brassicales</taxon>
        <taxon>Brassicaceae</taxon>
        <taxon>Camelineae</taxon>
        <taxon>Arabidopsis</taxon>
    </lineage>
</organism>